<proteinExistence type="inferred from homology"/>
<protein>
    <recommendedName>
        <fullName evidence="1">Dihydroorotate dehydrogenase (quinone)</fullName>
        <ecNumber evidence="1">1.3.5.2</ecNumber>
    </recommendedName>
    <alternativeName>
        <fullName evidence="1">DHOdehase</fullName>
        <shortName evidence="1">DHOD</shortName>
        <shortName evidence="1">DHODase</shortName>
    </alternativeName>
    <alternativeName>
        <fullName evidence="1">Dihydroorotate oxidase</fullName>
    </alternativeName>
</protein>
<reference key="1">
    <citation type="journal article" date="2002" name="Proc. Natl. Acad. Sci. U.S.A.">
        <title>The genome sequence of the facultative intracellular pathogen Brucella melitensis.</title>
        <authorList>
            <person name="DelVecchio V.G."/>
            <person name="Kapatral V."/>
            <person name="Redkar R.J."/>
            <person name="Patra G."/>
            <person name="Mujer C."/>
            <person name="Los T."/>
            <person name="Ivanova N."/>
            <person name="Anderson I."/>
            <person name="Bhattacharyya A."/>
            <person name="Lykidis A."/>
            <person name="Reznik G."/>
            <person name="Jablonski L."/>
            <person name="Larsen N."/>
            <person name="D'Souza M."/>
            <person name="Bernal A."/>
            <person name="Mazur M."/>
            <person name="Goltsman E."/>
            <person name="Selkov E."/>
            <person name="Elzer P.H."/>
            <person name="Hagius S."/>
            <person name="O'Callaghan D."/>
            <person name="Letesson J.-J."/>
            <person name="Haselkorn R."/>
            <person name="Kyrpides N.C."/>
            <person name="Overbeek R."/>
        </authorList>
    </citation>
    <scope>NUCLEOTIDE SEQUENCE [LARGE SCALE GENOMIC DNA]</scope>
    <source>
        <strain>ATCC 23456 / CCUG 17765 / NCTC 10094 / 16M</strain>
    </source>
</reference>
<dbReference type="EC" id="1.3.5.2" evidence="1"/>
<dbReference type="EMBL" id="AE008917">
    <property type="protein sequence ID" value="AAL52792.1"/>
    <property type="molecule type" value="Genomic_DNA"/>
</dbReference>
<dbReference type="PIR" id="AE3453">
    <property type="entry name" value="AE3453"/>
</dbReference>
<dbReference type="RefSeq" id="WP_004682882.1">
    <property type="nucleotide sequence ID" value="NZ_GG703778.1"/>
</dbReference>
<dbReference type="SMR" id="Q8YFB1"/>
<dbReference type="GeneID" id="29594456"/>
<dbReference type="KEGG" id="bme:BMEI1611"/>
<dbReference type="KEGG" id="bmel:DK63_1880"/>
<dbReference type="PATRIC" id="fig|224914.52.peg.1979"/>
<dbReference type="eggNOG" id="COG0167">
    <property type="taxonomic scope" value="Bacteria"/>
</dbReference>
<dbReference type="PhylomeDB" id="Q8YFB1"/>
<dbReference type="UniPathway" id="UPA00070">
    <property type="reaction ID" value="UER00946"/>
</dbReference>
<dbReference type="Proteomes" id="UP000000419">
    <property type="component" value="Chromosome I"/>
</dbReference>
<dbReference type="GO" id="GO:0005737">
    <property type="term" value="C:cytoplasm"/>
    <property type="evidence" value="ECO:0007669"/>
    <property type="project" value="InterPro"/>
</dbReference>
<dbReference type="GO" id="GO:0005886">
    <property type="term" value="C:plasma membrane"/>
    <property type="evidence" value="ECO:0007669"/>
    <property type="project" value="UniProtKB-SubCell"/>
</dbReference>
<dbReference type="GO" id="GO:0106430">
    <property type="term" value="F:dihydroorotate dehydrogenase (quinone) activity"/>
    <property type="evidence" value="ECO:0007669"/>
    <property type="project" value="UniProtKB-EC"/>
</dbReference>
<dbReference type="GO" id="GO:0006207">
    <property type="term" value="P:'de novo' pyrimidine nucleobase biosynthetic process"/>
    <property type="evidence" value="ECO:0007669"/>
    <property type="project" value="InterPro"/>
</dbReference>
<dbReference type="GO" id="GO:0044205">
    <property type="term" value="P:'de novo' UMP biosynthetic process"/>
    <property type="evidence" value="ECO:0007669"/>
    <property type="project" value="UniProtKB-UniRule"/>
</dbReference>
<dbReference type="CDD" id="cd04738">
    <property type="entry name" value="DHOD_2_like"/>
    <property type="match status" value="1"/>
</dbReference>
<dbReference type="Gene3D" id="3.20.20.70">
    <property type="entry name" value="Aldolase class I"/>
    <property type="match status" value="1"/>
</dbReference>
<dbReference type="HAMAP" id="MF_00225">
    <property type="entry name" value="DHO_dh_type2"/>
    <property type="match status" value="1"/>
</dbReference>
<dbReference type="InterPro" id="IPR013785">
    <property type="entry name" value="Aldolase_TIM"/>
</dbReference>
<dbReference type="InterPro" id="IPR050074">
    <property type="entry name" value="DHO_dehydrogenase"/>
</dbReference>
<dbReference type="InterPro" id="IPR005719">
    <property type="entry name" value="Dihydroorotate_DH_2"/>
</dbReference>
<dbReference type="InterPro" id="IPR005720">
    <property type="entry name" value="Dihydroorotate_DH_cat"/>
</dbReference>
<dbReference type="InterPro" id="IPR001295">
    <property type="entry name" value="Dihydroorotate_DH_CS"/>
</dbReference>
<dbReference type="NCBIfam" id="NF003645">
    <property type="entry name" value="PRK05286.1-2"/>
    <property type="match status" value="1"/>
</dbReference>
<dbReference type="NCBIfam" id="NF003652">
    <property type="entry name" value="PRK05286.2-5"/>
    <property type="match status" value="1"/>
</dbReference>
<dbReference type="NCBIfam" id="TIGR01036">
    <property type="entry name" value="pyrD_sub2"/>
    <property type="match status" value="1"/>
</dbReference>
<dbReference type="PANTHER" id="PTHR48109:SF4">
    <property type="entry name" value="DIHYDROOROTATE DEHYDROGENASE (QUINONE), MITOCHONDRIAL"/>
    <property type="match status" value="1"/>
</dbReference>
<dbReference type="PANTHER" id="PTHR48109">
    <property type="entry name" value="DIHYDROOROTATE DEHYDROGENASE (QUINONE), MITOCHONDRIAL-RELATED"/>
    <property type="match status" value="1"/>
</dbReference>
<dbReference type="Pfam" id="PF01180">
    <property type="entry name" value="DHO_dh"/>
    <property type="match status" value="1"/>
</dbReference>
<dbReference type="SUPFAM" id="SSF51395">
    <property type="entry name" value="FMN-linked oxidoreductases"/>
    <property type="match status" value="1"/>
</dbReference>
<dbReference type="PROSITE" id="PS00911">
    <property type="entry name" value="DHODEHASE_1"/>
    <property type="match status" value="1"/>
</dbReference>
<dbReference type="PROSITE" id="PS00912">
    <property type="entry name" value="DHODEHASE_2"/>
    <property type="match status" value="1"/>
</dbReference>
<accession>Q8YFB1</accession>
<feature type="chain" id="PRO_0000244530" description="Dihydroorotate dehydrogenase (quinone)">
    <location>
        <begin position="1"/>
        <end position="364"/>
    </location>
</feature>
<feature type="active site" description="Nucleophile" evidence="1">
    <location>
        <position position="173"/>
    </location>
</feature>
<feature type="binding site" evidence="1">
    <location>
        <begin position="61"/>
        <end position="65"/>
    </location>
    <ligand>
        <name>FMN</name>
        <dbReference type="ChEBI" id="CHEBI:58210"/>
    </ligand>
</feature>
<feature type="binding site" evidence="1">
    <location>
        <position position="65"/>
    </location>
    <ligand>
        <name>substrate</name>
    </ligand>
</feature>
<feature type="binding site" evidence="1">
    <location>
        <position position="85"/>
    </location>
    <ligand>
        <name>FMN</name>
        <dbReference type="ChEBI" id="CHEBI:58210"/>
    </ligand>
</feature>
<feature type="binding site" evidence="1">
    <location>
        <begin position="110"/>
        <end position="114"/>
    </location>
    <ligand>
        <name>substrate</name>
    </ligand>
</feature>
<feature type="binding site" evidence="1">
    <location>
        <position position="139"/>
    </location>
    <ligand>
        <name>FMN</name>
        <dbReference type="ChEBI" id="CHEBI:58210"/>
    </ligand>
</feature>
<feature type="binding site" evidence="1">
    <location>
        <position position="170"/>
    </location>
    <ligand>
        <name>FMN</name>
        <dbReference type="ChEBI" id="CHEBI:58210"/>
    </ligand>
</feature>
<feature type="binding site" evidence="1">
    <location>
        <position position="170"/>
    </location>
    <ligand>
        <name>substrate</name>
    </ligand>
</feature>
<feature type="binding site" evidence="1">
    <location>
        <position position="175"/>
    </location>
    <ligand>
        <name>substrate</name>
    </ligand>
</feature>
<feature type="binding site" evidence="1">
    <location>
        <position position="215"/>
    </location>
    <ligand>
        <name>FMN</name>
        <dbReference type="ChEBI" id="CHEBI:58210"/>
    </ligand>
</feature>
<feature type="binding site" evidence="1">
    <location>
        <position position="243"/>
    </location>
    <ligand>
        <name>FMN</name>
        <dbReference type="ChEBI" id="CHEBI:58210"/>
    </ligand>
</feature>
<feature type="binding site" evidence="1">
    <location>
        <begin position="244"/>
        <end position="245"/>
    </location>
    <ligand>
        <name>substrate</name>
    </ligand>
</feature>
<feature type="binding site" evidence="1">
    <location>
        <position position="266"/>
    </location>
    <ligand>
        <name>FMN</name>
        <dbReference type="ChEBI" id="CHEBI:58210"/>
    </ligand>
</feature>
<feature type="binding site" evidence="1">
    <location>
        <position position="295"/>
    </location>
    <ligand>
        <name>FMN</name>
        <dbReference type="ChEBI" id="CHEBI:58210"/>
    </ligand>
</feature>
<feature type="binding site" evidence="1">
    <location>
        <begin position="316"/>
        <end position="317"/>
    </location>
    <ligand>
        <name>FMN</name>
        <dbReference type="ChEBI" id="CHEBI:58210"/>
    </ligand>
</feature>
<name>PYRD_BRUME</name>
<organism>
    <name type="scientific">Brucella melitensis biotype 1 (strain ATCC 23456 / CCUG 17765 / NCTC 10094 / 16M)</name>
    <dbReference type="NCBI Taxonomy" id="224914"/>
    <lineage>
        <taxon>Bacteria</taxon>
        <taxon>Pseudomonadati</taxon>
        <taxon>Pseudomonadota</taxon>
        <taxon>Alphaproteobacteria</taxon>
        <taxon>Hyphomicrobiales</taxon>
        <taxon>Brucellaceae</taxon>
        <taxon>Brucella/Ochrobactrum group</taxon>
        <taxon>Brucella</taxon>
    </lineage>
</organism>
<sequence length="364" mass="39284">MSGLFETLGRRALFTFDAEQAHGLSITGLKTGIVTCRTPEDPALSVKVAGLKFPNPLGMAAGYDKNAEVPDALLKLGFGFAEVGTLTPRPQSGNPRPRIFRLVDDKAVINRLGFNNEGHEAAFKRLSRRAGKSGIVGVNIGANKDAEDRIADYVAGIRRFYQLARYFTVNISSPNTPGLRNLQAREALHELLSRVLEARDEEGNMCTLKRPVFLKIAPDLTDEELDDIAAEADAQKLDGIIVSNTTLSRSGLKNPENSNETGGLSGAPLFERSTVVLARMRERVGPDMPLIGVGGIDSAETALAKIKAGADLVQLYSGLIYRGPGLPGEILRGLSTAIKYEGVSSIAELRDRDTKEWAARKLIS</sequence>
<evidence type="ECO:0000255" key="1">
    <source>
        <dbReference type="HAMAP-Rule" id="MF_00225"/>
    </source>
</evidence>
<keyword id="KW-1003">Cell membrane</keyword>
<keyword id="KW-0285">Flavoprotein</keyword>
<keyword id="KW-0288">FMN</keyword>
<keyword id="KW-0472">Membrane</keyword>
<keyword id="KW-0560">Oxidoreductase</keyword>
<keyword id="KW-0665">Pyrimidine biosynthesis</keyword>
<comment type="function">
    <text evidence="1">Catalyzes the conversion of dihydroorotate to orotate with quinone as electron acceptor.</text>
</comment>
<comment type="catalytic activity">
    <reaction evidence="1">
        <text>(S)-dihydroorotate + a quinone = orotate + a quinol</text>
        <dbReference type="Rhea" id="RHEA:30187"/>
        <dbReference type="ChEBI" id="CHEBI:24646"/>
        <dbReference type="ChEBI" id="CHEBI:30839"/>
        <dbReference type="ChEBI" id="CHEBI:30864"/>
        <dbReference type="ChEBI" id="CHEBI:132124"/>
        <dbReference type="EC" id="1.3.5.2"/>
    </reaction>
</comment>
<comment type="cofactor">
    <cofactor evidence="1">
        <name>FMN</name>
        <dbReference type="ChEBI" id="CHEBI:58210"/>
    </cofactor>
    <text evidence="1">Binds 1 FMN per subunit.</text>
</comment>
<comment type="pathway">
    <text evidence="1">Pyrimidine metabolism; UMP biosynthesis via de novo pathway; orotate from (S)-dihydroorotate (quinone route): step 1/1.</text>
</comment>
<comment type="subunit">
    <text evidence="1">Monomer.</text>
</comment>
<comment type="subcellular location">
    <subcellularLocation>
        <location evidence="1">Cell membrane</location>
        <topology evidence="1">Peripheral membrane protein</topology>
    </subcellularLocation>
</comment>
<comment type="similarity">
    <text evidence="1">Belongs to the dihydroorotate dehydrogenase family. Type 2 subfamily.</text>
</comment>
<gene>
    <name evidence="1" type="primary">pyrD</name>
    <name type="ordered locus">BMEI1611</name>
</gene>